<evidence type="ECO:0000305" key="1"/>
<feature type="chain" id="PRO_0000396045" description="F-box protein At3g58530">
    <location>
        <begin position="1"/>
        <end position="353"/>
    </location>
</feature>
<feature type="domain" description="F-box; degenerate">
    <location>
        <begin position="8"/>
        <end position="56"/>
    </location>
</feature>
<feature type="sequence conflict" description="In Ref. 3; AAK96751/AAL47349." evidence="1" ref="3">
    <original>E</original>
    <variation>G</variation>
    <location>
        <position position="268"/>
    </location>
</feature>
<name>FB330_ARATH</name>
<proteinExistence type="evidence at transcript level"/>
<accession>Q8LB33</accession>
<accession>Q940J3</accession>
<accession>Q9M2G3</accession>
<organism>
    <name type="scientific">Arabidopsis thaliana</name>
    <name type="common">Mouse-ear cress</name>
    <dbReference type="NCBI Taxonomy" id="3702"/>
    <lineage>
        <taxon>Eukaryota</taxon>
        <taxon>Viridiplantae</taxon>
        <taxon>Streptophyta</taxon>
        <taxon>Embryophyta</taxon>
        <taxon>Tracheophyta</taxon>
        <taxon>Spermatophyta</taxon>
        <taxon>Magnoliopsida</taxon>
        <taxon>eudicotyledons</taxon>
        <taxon>Gunneridae</taxon>
        <taxon>Pentapetalae</taxon>
        <taxon>rosids</taxon>
        <taxon>malvids</taxon>
        <taxon>Brassicales</taxon>
        <taxon>Brassicaceae</taxon>
        <taxon>Camelineae</taxon>
        <taxon>Arabidopsis</taxon>
    </lineage>
</organism>
<reference key="1">
    <citation type="journal article" date="2000" name="Nature">
        <title>Sequence and analysis of chromosome 3 of the plant Arabidopsis thaliana.</title>
        <authorList>
            <person name="Salanoubat M."/>
            <person name="Lemcke K."/>
            <person name="Rieger M."/>
            <person name="Ansorge W."/>
            <person name="Unseld M."/>
            <person name="Fartmann B."/>
            <person name="Valle G."/>
            <person name="Bloecker H."/>
            <person name="Perez-Alonso M."/>
            <person name="Obermaier B."/>
            <person name="Delseny M."/>
            <person name="Boutry M."/>
            <person name="Grivell L.A."/>
            <person name="Mache R."/>
            <person name="Puigdomenech P."/>
            <person name="De Simone V."/>
            <person name="Choisne N."/>
            <person name="Artiguenave F."/>
            <person name="Robert C."/>
            <person name="Brottier P."/>
            <person name="Wincker P."/>
            <person name="Cattolico L."/>
            <person name="Weissenbach J."/>
            <person name="Saurin W."/>
            <person name="Quetier F."/>
            <person name="Schaefer M."/>
            <person name="Mueller-Auer S."/>
            <person name="Gabel C."/>
            <person name="Fuchs M."/>
            <person name="Benes V."/>
            <person name="Wurmbach E."/>
            <person name="Drzonek H."/>
            <person name="Erfle H."/>
            <person name="Jordan N."/>
            <person name="Bangert S."/>
            <person name="Wiedelmann R."/>
            <person name="Kranz H."/>
            <person name="Voss H."/>
            <person name="Holland R."/>
            <person name="Brandt P."/>
            <person name="Nyakatura G."/>
            <person name="Vezzi A."/>
            <person name="D'Angelo M."/>
            <person name="Pallavicini A."/>
            <person name="Toppo S."/>
            <person name="Simionati B."/>
            <person name="Conrad A."/>
            <person name="Hornischer K."/>
            <person name="Kauer G."/>
            <person name="Loehnert T.-H."/>
            <person name="Nordsiek G."/>
            <person name="Reichelt J."/>
            <person name="Scharfe M."/>
            <person name="Schoen O."/>
            <person name="Bargues M."/>
            <person name="Terol J."/>
            <person name="Climent J."/>
            <person name="Navarro P."/>
            <person name="Collado C."/>
            <person name="Perez-Perez A."/>
            <person name="Ottenwaelder B."/>
            <person name="Duchemin D."/>
            <person name="Cooke R."/>
            <person name="Laudie M."/>
            <person name="Berger-Llauro C."/>
            <person name="Purnelle B."/>
            <person name="Masuy D."/>
            <person name="de Haan M."/>
            <person name="Maarse A.C."/>
            <person name="Alcaraz J.-P."/>
            <person name="Cottet A."/>
            <person name="Casacuberta E."/>
            <person name="Monfort A."/>
            <person name="Argiriou A."/>
            <person name="Flores M."/>
            <person name="Liguori R."/>
            <person name="Vitale D."/>
            <person name="Mannhaupt G."/>
            <person name="Haase D."/>
            <person name="Schoof H."/>
            <person name="Rudd S."/>
            <person name="Zaccaria P."/>
            <person name="Mewes H.-W."/>
            <person name="Mayer K.F.X."/>
            <person name="Kaul S."/>
            <person name="Town C.D."/>
            <person name="Koo H.L."/>
            <person name="Tallon L.J."/>
            <person name="Jenkins J."/>
            <person name="Rooney T."/>
            <person name="Rizzo M."/>
            <person name="Walts A."/>
            <person name="Utterback T."/>
            <person name="Fujii C.Y."/>
            <person name="Shea T.P."/>
            <person name="Creasy T.H."/>
            <person name="Haas B."/>
            <person name="Maiti R."/>
            <person name="Wu D."/>
            <person name="Peterson J."/>
            <person name="Van Aken S."/>
            <person name="Pai G."/>
            <person name="Militscher J."/>
            <person name="Sellers P."/>
            <person name="Gill J.E."/>
            <person name="Feldblyum T.V."/>
            <person name="Preuss D."/>
            <person name="Lin X."/>
            <person name="Nierman W.C."/>
            <person name="Salzberg S.L."/>
            <person name="White O."/>
            <person name="Venter J.C."/>
            <person name="Fraser C.M."/>
            <person name="Kaneko T."/>
            <person name="Nakamura Y."/>
            <person name="Sato S."/>
            <person name="Kato T."/>
            <person name="Asamizu E."/>
            <person name="Sasamoto S."/>
            <person name="Kimura T."/>
            <person name="Idesawa K."/>
            <person name="Kawashima K."/>
            <person name="Kishida Y."/>
            <person name="Kiyokawa C."/>
            <person name="Kohara M."/>
            <person name="Matsumoto M."/>
            <person name="Matsuno A."/>
            <person name="Muraki A."/>
            <person name="Nakayama S."/>
            <person name="Nakazaki N."/>
            <person name="Shinpo S."/>
            <person name="Takeuchi C."/>
            <person name="Wada T."/>
            <person name="Watanabe A."/>
            <person name="Yamada M."/>
            <person name="Yasuda M."/>
            <person name="Tabata S."/>
        </authorList>
    </citation>
    <scope>NUCLEOTIDE SEQUENCE [LARGE SCALE GENOMIC DNA]</scope>
    <source>
        <strain>cv. Columbia</strain>
    </source>
</reference>
<reference key="2">
    <citation type="journal article" date="2017" name="Plant J.">
        <title>Araport11: a complete reannotation of the Arabidopsis thaliana reference genome.</title>
        <authorList>
            <person name="Cheng C.Y."/>
            <person name="Krishnakumar V."/>
            <person name="Chan A.P."/>
            <person name="Thibaud-Nissen F."/>
            <person name="Schobel S."/>
            <person name="Town C.D."/>
        </authorList>
    </citation>
    <scope>GENOME REANNOTATION</scope>
    <source>
        <strain>cv. Columbia</strain>
    </source>
</reference>
<reference key="3">
    <citation type="journal article" date="2003" name="Science">
        <title>Empirical analysis of transcriptional activity in the Arabidopsis genome.</title>
        <authorList>
            <person name="Yamada K."/>
            <person name="Lim J."/>
            <person name="Dale J.M."/>
            <person name="Chen H."/>
            <person name="Shinn P."/>
            <person name="Palm C.J."/>
            <person name="Southwick A.M."/>
            <person name="Wu H.C."/>
            <person name="Kim C.J."/>
            <person name="Nguyen M."/>
            <person name="Pham P.K."/>
            <person name="Cheuk R.F."/>
            <person name="Karlin-Newmann G."/>
            <person name="Liu S.X."/>
            <person name="Lam B."/>
            <person name="Sakano H."/>
            <person name="Wu T."/>
            <person name="Yu G."/>
            <person name="Miranda M."/>
            <person name="Quach H.L."/>
            <person name="Tripp M."/>
            <person name="Chang C.H."/>
            <person name="Lee J.M."/>
            <person name="Toriumi M.J."/>
            <person name="Chan M.M."/>
            <person name="Tang C.C."/>
            <person name="Onodera C.S."/>
            <person name="Deng J.M."/>
            <person name="Akiyama K."/>
            <person name="Ansari Y."/>
            <person name="Arakawa T."/>
            <person name="Banh J."/>
            <person name="Banno F."/>
            <person name="Bowser L."/>
            <person name="Brooks S.Y."/>
            <person name="Carninci P."/>
            <person name="Chao Q."/>
            <person name="Choy N."/>
            <person name="Enju A."/>
            <person name="Goldsmith A.D."/>
            <person name="Gurjal M."/>
            <person name="Hansen N.F."/>
            <person name="Hayashizaki Y."/>
            <person name="Johnson-Hopson C."/>
            <person name="Hsuan V.W."/>
            <person name="Iida K."/>
            <person name="Karnes M."/>
            <person name="Khan S."/>
            <person name="Koesema E."/>
            <person name="Ishida J."/>
            <person name="Jiang P.X."/>
            <person name="Jones T."/>
            <person name="Kawai J."/>
            <person name="Kamiya A."/>
            <person name="Meyers C."/>
            <person name="Nakajima M."/>
            <person name="Narusaka M."/>
            <person name="Seki M."/>
            <person name="Sakurai T."/>
            <person name="Satou M."/>
            <person name="Tamse R."/>
            <person name="Vaysberg M."/>
            <person name="Wallender E.K."/>
            <person name="Wong C."/>
            <person name="Yamamura Y."/>
            <person name="Yuan S."/>
            <person name="Shinozaki K."/>
            <person name="Davis R.W."/>
            <person name="Theologis A."/>
            <person name="Ecker J.R."/>
        </authorList>
    </citation>
    <scope>NUCLEOTIDE SEQUENCE [LARGE SCALE MRNA]</scope>
    <source>
        <strain>cv. Columbia</strain>
    </source>
</reference>
<reference key="4">
    <citation type="submission" date="2002-03" db="EMBL/GenBank/DDBJ databases">
        <title>Full-length cDNA from Arabidopsis thaliana.</title>
        <authorList>
            <person name="Brover V.V."/>
            <person name="Troukhan M.E."/>
            <person name="Alexandrov N.A."/>
            <person name="Lu Y.-P."/>
            <person name="Flavell R.B."/>
            <person name="Feldmann K.A."/>
        </authorList>
    </citation>
    <scope>NUCLEOTIDE SEQUENCE [LARGE SCALE MRNA]</scope>
    <source>
        <strain>cv. Columbia</strain>
    </source>
</reference>
<protein>
    <recommendedName>
        <fullName>F-box protein At3g58530</fullName>
    </recommendedName>
</protein>
<sequence length="353" mass="39733">MEAKKVTEEEEETWRREIVTSVMRLVSTRLPQTDLISLLLVSPWLYRTLISYPSIWLTINLREMTNAGDRLLAALSLPRYRQVKHINLEFAQGVVDSHLKLVKTECPDALLSLEWLNLNVCQKISDNGIEAITSICPKLKVFSIYWNVRVTDAGIRNLVKNCRHITDLNLSGCKSLTDKSMQLVAESYPDLESLNITRCVKITDDGLLQVLQKCFSLQTLNLYALSGFTDKAYMKISLLADLRFLDICGAQNISDEGIGHIAKCNKLESLNLTWCVRITDAGVNTIANSCTSLEFLSLFGIVGVTDRCLETLSQTCSTTLTTLDVNGCTGIKRRSREELLQMFPRLTCFKVHS</sequence>
<gene>
    <name type="ordered locus">At3g58530</name>
    <name type="ORF">F14P22.120</name>
</gene>
<dbReference type="EMBL" id="AL137082">
    <property type="protein sequence ID" value="CAB68191.1"/>
    <property type="status" value="ALT_SEQ"/>
    <property type="molecule type" value="Genomic_DNA"/>
</dbReference>
<dbReference type="EMBL" id="CP002686">
    <property type="protein sequence ID" value="AEE79796.1"/>
    <property type="molecule type" value="Genomic_DNA"/>
</dbReference>
<dbReference type="EMBL" id="AY054560">
    <property type="protein sequence ID" value="AAK96751.1"/>
    <property type="molecule type" value="mRNA"/>
</dbReference>
<dbReference type="EMBL" id="AY064636">
    <property type="protein sequence ID" value="AAL47349.1"/>
    <property type="molecule type" value="mRNA"/>
</dbReference>
<dbReference type="EMBL" id="AY087448">
    <property type="protein sequence ID" value="AAM64994.1"/>
    <property type="molecule type" value="mRNA"/>
</dbReference>
<dbReference type="PIR" id="T45673">
    <property type="entry name" value="T45673"/>
</dbReference>
<dbReference type="RefSeq" id="NP_567069.1">
    <property type="nucleotide sequence ID" value="NM_115715.2"/>
</dbReference>
<dbReference type="SMR" id="Q8LB33"/>
<dbReference type="FunCoup" id="Q8LB33">
    <property type="interactions" value="1621"/>
</dbReference>
<dbReference type="STRING" id="3702.Q8LB33"/>
<dbReference type="PaxDb" id="3702-AT3G58530.1"/>
<dbReference type="ProteomicsDB" id="222555"/>
<dbReference type="EnsemblPlants" id="AT3G58530.1">
    <property type="protein sequence ID" value="AT3G58530.1"/>
    <property type="gene ID" value="AT3G58530"/>
</dbReference>
<dbReference type="GeneID" id="825022"/>
<dbReference type="Gramene" id="AT3G58530.1">
    <property type="protein sequence ID" value="AT3G58530.1"/>
    <property type="gene ID" value="AT3G58530"/>
</dbReference>
<dbReference type="KEGG" id="ath:AT3G58530"/>
<dbReference type="Araport" id="AT3G58530"/>
<dbReference type="TAIR" id="AT3G58530"/>
<dbReference type="eggNOG" id="KOG1947">
    <property type="taxonomic scope" value="Eukaryota"/>
</dbReference>
<dbReference type="HOGENOM" id="CLU_016072_1_0_1"/>
<dbReference type="InParanoid" id="Q8LB33"/>
<dbReference type="OMA" id="PRYCHLK"/>
<dbReference type="PhylomeDB" id="Q8LB33"/>
<dbReference type="PRO" id="PR:Q8LB33"/>
<dbReference type="Proteomes" id="UP000006548">
    <property type="component" value="Chromosome 3"/>
</dbReference>
<dbReference type="ExpressionAtlas" id="Q8LB33">
    <property type="expression patterns" value="baseline and differential"/>
</dbReference>
<dbReference type="FunFam" id="3.80.10.10:FF:000535">
    <property type="entry name" value="Leucine Rich Repeat family protein"/>
    <property type="match status" value="1"/>
</dbReference>
<dbReference type="Gene3D" id="3.80.10.10">
    <property type="entry name" value="Ribonuclease Inhibitor"/>
    <property type="match status" value="3"/>
</dbReference>
<dbReference type="InterPro" id="IPR001611">
    <property type="entry name" value="Leu-rich_rpt"/>
</dbReference>
<dbReference type="InterPro" id="IPR006553">
    <property type="entry name" value="Leu-rich_rpt_Cys-con_subtyp"/>
</dbReference>
<dbReference type="InterPro" id="IPR032675">
    <property type="entry name" value="LRR_dom_sf"/>
</dbReference>
<dbReference type="PANTHER" id="PTHR13318">
    <property type="entry name" value="PARTNER OF PAIRED, ISOFORM B-RELATED"/>
    <property type="match status" value="1"/>
</dbReference>
<dbReference type="Pfam" id="PF13516">
    <property type="entry name" value="LRR_6"/>
    <property type="match status" value="3"/>
</dbReference>
<dbReference type="SMART" id="SM00367">
    <property type="entry name" value="LRR_CC"/>
    <property type="match status" value="7"/>
</dbReference>
<dbReference type="SUPFAM" id="SSF52047">
    <property type="entry name" value="RNI-like"/>
    <property type="match status" value="1"/>
</dbReference>
<comment type="sequence caution" evidence="1">
    <conflict type="erroneous gene model prediction">
        <sequence resource="EMBL-CDS" id="CAB68191"/>
    </conflict>
</comment>
<keyword id="KW-1185">Reference proteome</keyword>